<gene>
    <name evidence="1" type="primary">queA</name>
    <name type="ordered locus">PD_0562</name>
</gene>
<keyword id="KW-0963">Cytoplasm</keyword>
<keyword id="KW-0671">Queuosine biosynthesis</keyword>
<keyword id="KW-1185">Reference proteome</keyword>
<keyword id="KW-0949">S-adenosyl-L-methionine</keyword>
<keyword id="KW-0808">Transferase</keyword>
<evidence type="ECO:0000255" key="1">
    <source>
        <dbReference type="HAMAP-Rule" id="MF_00113"/>
    </source>
</evidence>
<comment type="function">
    <text evidence="1">Transfers and isomerizes the ribose moiety from AdoMet to the 7-aminomethyl group of 7-deazaguanine (preQ1-tRNA) to give epoxyqueuosine (oQ-tRNA).</text>
</comment>
<comment type="catalytic activity">
    <reaction evidence="1">
        <text>7-aminomethyl-7-carbaguanosine(34) in tRNA + S-adenosyl-L-methionine = epoxyqueuosine(34) in tRNA + adenine + L-methionine + 2 H(+)</text>
        <dbReference type="Rhea" id="RHEA:32155"/>
        <dbReference type="Rhea" id="RHEA-COMP:10342"/>
        <dbReference type="Rhea" id="RHEA-COMP:18582"/>
        <dbReference type="ChEBI" id="CHEBI:15378"/>
        <dbReference type="ChEBI" id="CHEBI:16708"/>
        <dbReference type="ChEBI" id="CHEBI:57844"/>
        <dbReference type="ChEBI" id="CHEBI:59789"/>
        <dbReference type="ChEBI" id="CHEBI:82833"/>
        <dbReference type="ChEBI" id="CHEBI:194443"/>
        <dbReference type="EC" id="2.4.99.17"/>
    </reaction>
</comment>
<comment type="pathway">
    <text evidence="1">tRNA modification; tRNA-queuosine biosynthesis.</text>
</comment>
<comment type="subunit">
    <text evidence="1">Monomer.</text>
</comment>
<comment type="subcellular location">
    <subcellularLocation>
        <location evidence="1">Cytoplasm</location>
    </subcellularLocation>
</comment>
<comment type="similarity">
    <text evidence="1">Belongs to the QueA family.</text>
</comment>
<dbReference type="EC" id="2.4.99.17" evidence="1"/>
<dbReference type="EMBL" id="AE009442">
    <property type="protein sequence ID" value="AAO28435.1"/>
    <property type="molecule type" value="Genomic_DNA"/>
</dbReference>
<dbReference type="SMR" id="Q87DW7"/>
<dbReference type="KEGG" id="xft:PD_0562"/>
<dbReference type="HOGENOM" id="CLU_039110_1_0_6"/>
<dbReference type="UniPathway" id="UPA00392"/>
<dbReference type="Proteomes" id="UP000002516">
    <property type="component" value="Chromosome"/>
</dbReference>
<dbReference type="GO" id="GO:0005737">
    <property type="term" value="C:cytoplasm"/>
    <property type="evidence" value="ECO:0007669"/>
    <property type="project" value="UniProtKB-SubCell"/>
</dbReference>
<dbReference type="GO" id="GO:0051075">
    <property type="term" value="F:S-adenosylmethionine:tRNA ribosyltransferase-isomerase activity"/>
    <property type="evidence" value="ECO:0007669"/>
    <property type="project" value="UniProtKB-EC"/>
</dbReference>
<dbReference type="GO" id="GO:0008616">
    <property type="term" value="P:queuosine biosynthetic process"/>
    <property type="evidence" value="ECO:0007669"/>
    <property type="project" value="UniProtKB-UniRule"/>
</dbReference>
<dbReference type="GO" id="GO:0002099">
    <property type="term" value="P:tRNA wobble guanine modification"/>
    <property type="evidence" value="ECO:0007669"/>
    <property type="project" value="TreeGrafter"/>
</dbReference>
<dbReference type="FunFam" id="3.40.1780.10:FF:000001">
    <property type="entry name" value="S-adenosylmethionine:tRNA ribosyltransferase-isomerase"/>
    <property type="match status" value="1"/>
</dbReference>
<dbReference type="Gene3D" id="2.40.10.240">
    <property type="entry name" value="QueA-like"/>
    <property type="match status" value="1"/>
</dbReference>
<dbReference type="Gene3D" id="3.40.1780.10">
    <property type="entry name" value="QueA-like"/>
    <property type="match status" value="1"/>
</dbReference>
<dbReference type="HAMAP" id="MF_00113">
    <property type="entry name" value="QueA"/>
    <property type="match status" value="1"/>
</dbReference>
<dbReference type="InterPro" id="IPR003699">
    <property type="entry name" value="QueA"/>
</dbReference>
<dbReference type="InterPro" id="IPR042118">
    <property type="entry name" value="QueA_dom1"/>
</dbReference>
<dbReference type="InterPro" id="IPR042119">
    <property type="entry name" value="QueA_dom2"/>
</dbReference>
<dbReference type="InterPro" id="IPR036100">
    <property type="entry name" value="QueA_sf"/>
</dbReference>
<dbReference type="NCBIfam" id="NF001140">
    <property type="entry name" value="PRK00147.1"/>
    <property type="match status" value="1"/>
</dbReference>
<dbReference type="NCBIfam" id="TIGR00113">
    <property type="entry name" value="queA"/>
    <property type="match status" value="1"/>
</dbReference>
<dbReference type="PANTHER" id="PTHR30307">
    <property type="entry name" value="S-ADENOSYLMETHIONINE:TRNA RIBOSYLTRANSFERASE-ISOMERASE"/>
    <property type="match status" value="1"/>
</dbReference>
<dbReference type="PANTHER" id="PTHR30307:SF0">
    <property type="entry name" value="S-ADENOSYLMETHIONINE:TRNA RIBOSYLTRANSFERASE-ISOMERASE"/>
    <property type="match status" value="1"/>
</dbReference>
<dbReference type="Pfam" id="PF02547">
    <property type="entry name" value="Queuosine_synth"/>
    <property type="match status" value="1"/>
</dbReference>
<dbReference type="SUPFAM" id="SSF111337">
    <property type="entry name" value="QueA-like"/>
    <property type="match status" value="1"/>
</dbReference>
<protein>
    <recommendedName>
        <fullName evidence="1">S-adenosylmethionine:tRNA ribosyltransferase-isomerase</fullName>
        <ecNumber evidence="1">2.4.99.17</ecNumber>
    </recommendedName>
    <alternativeName>
        <fullName evidence="1">Queuosine biosynthesis protein QueA</fullName>
    </alternativeName>
</protein>
<feature type="chain" id="PRO_0000165467" description="S-adenosylmethionine:tRNA ribosyltransferase-isomerase">
    <location>
        <begin position="1"/>
        <end position="347"/>
    </location>
</feature>
<proteinExistence type="inferred from homology"/>
<reference key="1">
    <citation type="journal article" date="2003" name="J. Bacteriol.">
        <title>Comparative analyses of the complete genome sequences of Pierce's disease and citrus variegated chlorosis strains of Xylella fastidiosa.</title>
        <authorList>
            <person name="Van Sluys M.A."/>
            <person name="de Oliveira M.C."/>
            <person name="Monteiro-Vitorello C.B."/>
            <person name="Miyaki C.Y."/>
            <person name="Furlan L.R."/>
            <person name="Camargo L.E.A."/>
            <person name="da Silva A.C.R."/>
            <person name="Moon D.H."/>
            <person name="Takita M.A."/>
            <person name="Lemos E.G.M."/>
            <person name="Machado M.A."/>
            <person name="Ferro M.I.T."/>
            <person name="da Silva F.R."/>
            <person name="Goldman M.H.S."/>
            <person name="Goldman G.H."/>
            <person name="Lemos M.V.F."/>
            <person name="El-Dorry H."/>
            <person name="Tsai S.M."/>
            <person name="Carrer H."/>
            <person name="Carraro D.M."/>
            <person name="de Oliveira R.C."/>
            <person name="Nunes L.R."/>
            <person name="Siqueira W.J."/>
            <person name="Coutinho L.L."/>
            <person name="Kimura E.T."/>
            <person name="Ferro E.S."/>
            <person name="Harakava R."/>
            <person name="Kuramae E.E."/>
            <person name="Marino C.L."/>
            <person name="Giglioti E."/>
            <person name="Abreu I.L."/>
            <person name="Alves L.M.C."/>
            <person name="do Amaral A.M."/>
            <person name="Baia G.S."/>
            <person name="Blanco S.R."/>
            <person name="Brito M.S."/>
            <person name="Cannavan F.S."/>
            <person name="Celestino A.V."/>
            <person name="da Cunha A.F."/>
            <person name="Fenille R.C."/>
            <person name="Ferro J.A."/>
            <person name="Formighieri E.F."/>
            <person name="Kishi L.T."/>
            <person name="Leoni S.G."/>
            <person name="Oliveira A.R."/>
            <person name="Rosa V.E. Jr."/>
            <person name="Sassaki F.T."/>
            <person name="Sena J.A.D."/>
            <person name="de Souza A.A."/>
            <person name="Truffi D."/>
            <person name="Tsukumo F."/>
            <person name="Yanai G.M."/>
            <person name="Zaros L.G."/>
            <person name="Civerolo E.L."/>
            <person name="Simpson A.J.G."/>
            <person name="Almeida N.F. Jr."/>
            <person name="Setubal J.C."/>
            <person name="Kitajima J.P."/>
        </authorList>
    </citation>
    <scope>NUCLEOTIDE SEQUENCE [LARGE SCALE GENOMIC DNA]</scope>
    <source>
        <strain>Temecula1 / ATCC 700964</strain>
    </source>
</reference>
<organism>
    <name type="scientific">Xylella fastidiosa (strain Temecula1 / ATCC 700964)</name>
    <dbReference type="NCBI Taxonomy" id="183190"/>
    <lineage>
        <taxon>Bacteria</taxon>
        <taxon>Pseudomonadati</taxon>
        <taxon>Pseudomonadota</taxon>
        <taxon>Gammaproteobacteria</taxon>
        <taxon>Lysobacterales</taxon>
        <taxon>Lysobacteraceae</taxon>
        <taxon>Xylella</taxon>
    </lineage>
</organism>
<accession>Q87DW7</accession>
<sequence>MLKKSDFHYDLPEELIAQGPLPERSASRLMLVPSAPEQFQDCYVRDLPELLQPGDLLVFNDTRVIPARLFGRKVSGGRVELLIERFLGTHQAVVQLRTSRSLKVGNRILLDAGGHAEVLGRDGEFYLLSFDVESPLEQWLSDVGQLPLPPYIHREPDEYDRERYQTVFARSVGAVAAPTAGLHFDESLLARLRARGVEFGYITLHVGAGTFQPVRVALLQEHVMHSEWFKVGAELVEQVRSARARGGRVIAVGTTVVRSLESAMRHGELQPFVGETQIFIFPGYCIRSVDAMVTNFHLPESTLLMLVAAFAGRTRILDAYYHAVQQRYRFFSYGDAMLLFPRNAGEQ</sequence>
<name>QUEA_XYLFT</name>